<reference key="1">
    <citation type="journal article" date="2007" name="PLoS Genet.">
        <title>Genome analysis of Minibacterium massiliensis highlights the convergent evolution of water-living bacteria.</title>
        <authorList>
            <person name="Audic S."/>
            <person name="Robert C."/>
            <person name="Campagna B."/>
            <person name="Parinello H."/>
            <person name="Claverie J.-M."/>
            <person name="Raoult D."/>
            <person name="Drancourt M."/>
        </authorList>
    </citation>
    <scope>NUCLEOTIDE SEQUENCE [LARGE SCALE GENOMIC DNA]</scope>
    <source>
        <strain>Marseille</strain>
    </source>
</reference>
<comment type="function">
    <text evidence="1">This protein specifically catalyzes the removal of signal peptides from prolipoproteins.</text>
</comment>
<comment type="catalytic activity">
    <reaction evidence="1">
        <text>Release of signal peptides from bacterial membrane prolipoproteins. Hydrolyzes -Xaa-Yaa-Zaa-|-(S,diacylglyceryl)Cys-, in which Xaa is hydrophobic (preferably Leu), and Yaa (Ala or Ser) and Zaa (Gly or Ala) have small, neutral side chains.</text>
        <dbReference type="EC" id="3.4.23.36"/>
    </reaction>
</comment>
<comment type="pathway">
    <text evidence="1">Protein modification; lipoprotein biosynthesis (signal peptide cleavage).</text>
</comment>
<comment type="subcellular location">
    <subcellularLocation>
        <location evidence="1">Cell inner membrane</location>
        <topology evidence="1">Multi-pass membrane protein</topology>
    </subcellularLocation>
</comment>
<comment type="similarity">
    <text evidence="1">Belongs to the peptidase A8 family.</text>
</comment>
<gene>
    <name evidence="1" type="primary">lspA</name>
    <name type="ordered locus">mma_0827</name>
</gene>
<sequence length="165" mass="18385">MASNKRYFSSSSSMLPWLGIAAVLVLLDQITKITITRLFVYGESHAVTSFFNLVLVYNKGAAFSFLASETGWQRYFFTIMGIGAAIFIIYLLKKHAGQRLFCWALALILGGAIGNVIDRVLYGHVIDFLDVHIGGWHWPAFNIADSAICIGAVLFIYDELRRVGK</sequence>
<proteinExistence type="inferred from homology"/>
<keyword id="KW-0064">Aspartyl protease</keyword>
<keyword id="KW-0997">Cell inner membrane</keyword>
<keyword id="KW-1003">Cell membrane</keyword>
<keyword id="KW-0378">Hydrolase</keyword>
<keyword id="KW-0472">Membrane</keyword>
<keyword id="KW-0645">Protease</keyword>
<keyword id="KW-0812">Transmembrane</keyword>
<keyword id="KW-1133">Transmembrane helix</keyword>
<organism>
    <name type="scientific">Janthinobacterium sp. (strain Marseille)</name>
    <name type="common">Minibacterium massiliensis</name>
    <dbReference type="NCBI Taxonomy" id="375286"/>
    <lineage>
        <taxon>Bacteria</taxon>
        <taxon>Pseudomonadati</taxon>
        <taxon>Pseudomonadota</taxon>
        <taxon>Betaproteobacteria</taxon>
        <taxon>Burkholderiales</taxon>
        <taxon>Oxalobacteraceae</taxon>
        <taxon>Janthinobacterium</taxon>
    </lineage>
</organism>
<name>LSPA_JANMA</name>
<evidence type="ECO:0000255" key="1">
    <source>
        <dbReference type="HAMAP-Rule" id="MF_00161"/>
    </source>
</evidence>
<feature type="chain" id="PRO_1000038806" description="Lipoprotein signal peptidase">
    <location>
        <begin position="1"/>
        <end position="165"/>
    </location>
</feature>
<feature type="transmembrane region" description="Helical" evidence="1">
    <location>
        <begin position="7"/>
        <end position="27"/>
    </location>
</feature>
<feature type="transmembrane region" description="Helical" evidence="1">
    <location>
        <begin position="46"/>
        <end position="66"/>
    </location>
</feature>
<feature type="transmembrane region" description="Helical" evidence="1">
    <location>
        <begin position="72"/>
        <end position="92"/>
    </location>
</feature>
<feature type="transmembrane region" description="Helical" evidence="1">
    <location>
        <begin position="100"/>
        <end position="120"/>
    </location>
</feature>
<feature type="transmembrane region" description="Helical" evidence="1">
    <location>
        <begin position="136"/>
        <end position="156"/>
    </location>
</feature>
<feature type="active site" evidence="1">
    <location>
        <position position="127"/>
    </location>
</feature>
<feature type="active site" evidence="1">
    <location>
        <position position="145"/>
    </location>
</feature>
<protein>
    <recommendedName>
        <fullName evidence="1">Lipoprotein signal peptidase</fullName>
        <ecNumber evidence="1">3.4.23.36</ecNumber>
    </recommendedName>
    <alternativeName>
        <fullName evidence="1">Prolipoprotein signal peptidase</fullName>
    </alternativeName>
    <alternativeName>
        <fullName evidence="1">Signal peptidase II</fullName>
        <shortName evidence="1">SPase II</shortName>
    </alternativeName>
</protein>
<dbReference type="EC" id="3.4.23.36" evidence="1"/>
<dbReference type="EMBL" id="CP000269">
    <property type="protein sequence ID" value="ABR88314.1"/>
    <property type="molecule type" value="Genomic_DNA"/>
</dbReference>
<dbReference type="RefSeq" id="WP_012078691.1">
    <property type="nucleotide sequence ID" value="NC_009659.1"/>
</dbReference>
<dbReference type="SMR" id="A6SW70"/>
<dbReference type="STRING" id="375286.mma_0827"/>
<dbReference type="KEGG" id="mms:mma_0827"/>
<dbReference type="eggNOG" id="COG0597">
    <property type="taxonomic scope" value="Bacteria"/>
</dbReference>
<dbReference type="HOGENOM" id="CLU_083252_4_0_4"/>
<dbReference type="OrthoDB" id="9810259at2"/>
<dbReference type="UniPathway" id="UPA00665"/>
<dbReference type="Proteomes" id="UP000006388">
    <property type="component" value="Chromosome"/>
</dbReference>
<dbReference type="GO" id="GO:0005886">
    <property type="term" value="C:plasma membrane"/>
    <property type="evidence" value="ECO:0007669"/>
    <property type="project" value="UniProtKB-SubCell"/>
</dbReference>
<dbReference type="GO" id="GO:0004190">
    <property type="term" value="F:aspartic-type endopeptidase activity"/>
    <property type="evidence" value="ECO:0007669"/>
    <property type="project" value="UniProtKB-UniRule"/>
</dbReference>
<dbReference type="GO" id="GO:0006508">
    <property type="term" value="P:proteolysis"/>
    <property type="evidence" value="ECO:0007669"/>
    <property type="project" value="UniProtKB-KW"/>
</dbReference>
<dbReference type="HAMAP" id="MF_00161">
    <property type="entry name" value="LspA"/>
    <property type="match status" value="1"/>
</dbReference>
<dbReference type="InterPro" id="IPR001872">
    <property type="entry name" value="Peptidase_A8"/>
</dbReference>
<dbReference type="NCBIfam" id="TIGR00077">
    <property type="entry name" value="lspA"/>
    <property type="match status" value="1"/>
</dbReference>
<dbReference type="PANTHER" id="PTHR33695">
    <property type="entry name" value="LIPOPROTEIN SIGNAL PEPTIDASE"/>
    <property type="match status" value="1"/>
</dbReference>
<dbReference type="PANTHER" id="PTHR33695:SF1">
    <property type="entry name" value="LIPOPROTEIN SIGNAL PEPTIDASE"/>
    <property type="match status" value="1"/>
</dbReference>
<dbReference type="Pfam" id="PF01252">
    <property type="entry name" value="Peptidase_A8"/>
    <property type="match status" value="1"/>
</dbReference>
<dbReference type="PRINTS" id="PR00781">
    <property type="entry name" value="LIPOSIGPTASE"/>
</dbReference>
<dbReference type="PROSITE" id="PS00855">
    <property type="entry name" value="SPASE_II"/>
    <property type="match status" value="1"/>
</dbReference>
<accession>A6SW70</accession>